<sequence length="311" mass="36022">MTSKVYDPEQRKRMITGPQWWARCKQMNVLDSFINYYDSEKHAENAVIFLHGNAASSYLWRHVVPHIEPVARCIIPDLIGMGKSGKSGNGSYRLLDHYKYLTAWFELLNLPKKIIFVGHDWGACLAFHYSYEHQDKIKAIVHAESVVDVIESWDEWPDIEEDIALIKSEEGEKMVLENNFFVETMLPSKIMRKLEPEEFAAYLEPFKEKGEVRRPTLSWPREIPLVKGGKPDVVQIVRNYNAYLRASDDLPKMFIESDPGFFSNAIVEGAKKFPNTEFVKVKGLHFSQEDAPDEMGKYIKSFVERVLKNEQ</sequence>
<reference key="1">
    <citation type="journal article" date="1991" name="Proc. Natl. Acad. Sci. U.S.A.">
        <title>Isolation and expression of a cDNA encoding Renilla reniformis luciferase.</title>
        <authorList>
            <person name="Lorenz W.W."/>
            <person name="McCann R.O."/>
            <person name="Longiaru M."/>
            <person name="Cormier M.J."/>
        </authorList>
    </citation>
    <scope>NUCLEOTIDE SEQUENCE [MRNA]</scope>
    <scope>PROTEIN SEQUENCE OF 161-183; 208-228; 256-277 AND 304-310</scope>
    <scope>FUNCTION</scope>
    <scope>CATALYTIC ACTIVITY</scope>
</reference>
<reference key="2">
    <citation type="journal article" date="1977" name="Biochemistry">
        <title>Purification and properties of Renilla reniformis luciferase.</title>
        <authorList>
            <person name="Matthews J.C."/>
            <person name="Hori K."/>
            <person name="Cormier M.J."/>
        </authorList>
    </citation>
    <scope>CATALYTIC ACTIVITY</scope>
    <scope>BIOPHYSICOCHEMICAL PROPERTIES</scope>
    <scope>SUBUNIT</scope>
</reference>
<reference key="3">
    <citation type="journal article" date="2007" name="J. Mol. Biol.">
        <title>Crystal structures of the luciferase and green fluorescent protein from Renilla reniformis.</title>
        <authorList>
            <person name="Loening A.M."/>
            <person name="Fenn T.D."/>
            <person name="Gambhir S.S."/>
        </authorList>
    </citation>
    <scope>X-RAY CRYSTALLOGRAPHY (1.40 ANGSTROMS) OF 3-311 OF APOENZYME AND IN COMPLEX WITH COELENTERAMIDE H</scope>
    <scope>SUBUNIT</scope>
</reference>
<proteinExistence type="evidence at protein level"/>
<organism>
    <name type="scientific">Renilla reniformis</name>
    <name type="common">Sea pansy</name>
    <dbReference type="NCBI Taxonomy" id="6136"/>
    <lineage>
        <taxon>Eukaryota</taxon>
        <taxon>Metazoa</taxon>
        <taxon>Cnidaria</taxon>
        <taxon>Anthozoa</taxon>
        <taxon>Octocorallia</taxon>
        <taxon>Scleralcyonacea</taxon>
        <taxon>Pennatuloidea</taxon>
        <taxon>Renillidae</taxon>
        <taxon>Renilla</taxon>
    </lineage>
</organism>
<dbReference type="EC" id="1.13.12.5" evidence="3"/>
<dbReference type="EMBL" id="M63501">
    <property type="protein sequence ID" value="AAA29804.1"/>
    <property type="molecule type" value="mRNA"/>
</dbReference>
<dbReference type="PDB" id="2PSD">
    <property type="method" value="X-ray"/>
    <property type="resolution" value="1.40 A"/>
    <property type="chains" value="A=3-311"/>
</dbReference>
<dbReference type="PDB" id="2PSE">
    <property type="method" value="X-ray"/>
    <property type="resolution" value="2.50 A"/>
    <property type="chains" value="A=3-311"/>
</dbReference>
<dbReference type="PDB" id="2PSF">
    <property type="method" value="X-ray"/>
    <property type="resolution" value="1.40 A"/>
    <property type="chains" value="A/B=3-311"/>
</dbReference>
<dbReference type="PDB" id="2PSH">
    <property type="method" value="X-ray"/>
    <property type="resolution" value="1.79 A"/>
    <property type="chains" value="A/B=1-311"/>
</dbReference>
<dbReference type="PDB" id="2PSJ">
    <property type="method" value="X-ray"/>
    <property type="resolution" value="1.80 A"/>
    <property type="chains" value="A/B=1-311"/>
</dbReference>
<dbReference type="PDB" id="6YN2">
    <property type="method" value="X-ray"/>
    <property type="resolution" value="1.90 A"/>
    <property type="chains" value="A/B=1-311"/>
</dbReference>
<dbReference type="PDB" id="7OMD">
    <property type="method" value="X-ray"/>
    <property type="resolution" value="1.60 A"/>
    <property type="chains" value="A/B=1-311"/>
</dbReference>
<dbReference type="PDB" id="7OMO">
    <property type="method" value="X-ray"/>
    <property type="resolution" value="1.45 A"/>
    <property type="chains" value="A/B=1-311"/>
</dbReference>
<dbReference type="PDB" id="7OMR">
    <property type="method" value="X-ray"/>
    <property type="resolution" value="1.50 A"/>
    <property type="chains" value="A=1-311"/>
</dbReference>
<dbReference type="PDBsum" id="2PSD"/>
<dbReference type="PDBsum" id="2PSE"/>
<dbReference type="PDBsum" id="2PSF"/>
<dbReference type="PDBsum" id="2PSH"/>
<dbReference type="PDBsum" id="2PSJ"/>
<dbReference type="PDBsum" id="6YN2"/>
<dbReference type="PDBsum" id="7OMD"/>
<dbReference type="PDBsum" id="7OMO"/>
<dbReference type="PDBsum" id="7OMR"/>
<dbReference type="SMR" id="P27652"/>
<dbReference type="ChEMBL" id="CHEMBL2303641"/>
<dbReference type="ESTHER" id="renre-luc">
    <property type="family name" value="Haloalkane_dehalogenase-HLD2"/>
</dbReference>
<dbReference type="KEGG" id="ag:AAA29804"/>
<dbReference type="BioCyc" id="MetaCyc:MONOMER-16919"/>
<dbReference type="BRENDA" id="1.13.12.5">
    <property type="organism ID" value="5324"/>
</dbReference>
<dbReference type="EvolutionaryTrace" id="P27652"/>
<dbReference type="GO" id="GO:0016020">
    <property type="term" value="C:membrane"/>
    <property type="evidence" value="ECO:0007669"/>
    <property type="project" value="TreeGrafter"/>
</dbReference>
<dbReference type="GO" id="GO:0016831">
    <property type="term" value="F:carboxy-lyase activity"/>
    <property type="evidence" value="ECO:0007669"/>
    <property type="project" value="UniProtKB-KW"/>
</dbReference>
<dbReference type="GO" id="GO:0050248">
    <property type="term" value="F:Renilla-luciferin 2-monooxygenase activity"/>
    <property type="evidence" value="ECO:0007669"/>
    <property type="project" value="UniProtKB-EC"/>
</dbReference>
<dbReference type="GO" id="GO:0008218">
    <property type="term" value="P:bioluminescence"/>
    <property type="evidence" value="ECO:0007669"/>
    <property type="project" value="UniProtKB-KW"/>
</dbReference>
<dbReference type="Gene3D" id="3.40.50.1820">
    <property type="entry name" value="alpha/beta hydrolase"/>
    <property type="match status" value="1"/>
</dbReference>
<dbReference type="InterPro" id="IPR000073">
    <property type="entry name" value="AB_hydrolase_1"/>
</dbReference>
<dbReference type="InterPro" id="IPR029058">
    <property type="entry name" value="AB_hydrolase_fold"/>
</dbReference>
<dbReference type="InterPro" id="IPR050266">
    <property type="entry name" value="AB_hydrolase_sf"/>
</dbReference>
<dbReference type="InterPro" id="IPR000639">
    <property type="entry name" value="Epox_hydrolase-like"/>
</dbReference>
<dbReference type="NCBIfam" id="NF002938">
    <property type="entry name" value="PRK03592.1"/>
    <property type="match status" value="1"/>
</dbReference>
<dbReference type="PANTHER" id="PTHR43798:SF24">
    <property type="entry name" value="CIS-3-ALKYL-4-ALKYLOXETAN-2-ONE DECARBOXYLASE"/>
    <property type="match status" value="1"/>
</dbReference>
<dbReference type="PANTHER" id="PTHR43798">
    <property type="entry name" value="MONOACYLGLYCEROL LIPASE"/>
    <property type="match status" value="1"/>
</dbReference>
<dbReference type="Pfam" id="PF00561">
    <property type="entry name" value="Abhydrolase_1"/>
    <property type="match status" value="1"/>
</dbReference>
<dbReference type="PRINTS" id="PR00412">
    <property type="entry name" value="EPOXHYDRLASE"/>
</dbReference>
<dbReference type="SUPFAM" id="SSF53474">
    <property type="entry name" value="alpha/beta-Hydrolases"/>
    <property type="match status" value="1"/>
</dbReference>
<evidence type="ECO:0000255" key="1"/>
<evidence type="ECO:0000269" key="2">
    <source>
    </source>
</evidence>
<evidence type="ECO:0000269" key="3">
    <source>
    </source>
</evidence>
<evidence type="ECO:0000269" key="4">
    <source>
    </source>
</evidence>
<evidence type="ECO:0000305" key="5"/>
<evidence type="ECO:0007744" key="6">
    <source>
        <dbReference type="PDB" id="2PSJ"/>
    </source>
</evidence>
<evidence type="ECO:0007829" key="7">
    <source>
        <dbReference type="PDB" id="2PSD"/>
    </source>
</evidence>
<evidence type="ECO:0007829" key="8">
    <source>
        <dbReference type="PDB" id="2PSF"/>
    </source>
</evidence>
<evidence type="ECO:0007829" key="9">
    <source>
        <dbReference type="PDB" id="7OMD"/>
    </source>
</evidence>
<evidence type="ECO:0007829" key="10">
    <source>
        <dbReference type="PDB" id="7OMR"/>
    </source>
</evidence>
<name>LUCI_RENRE</name>
<accession>P27652</accession>
<keyword id="KW-0002">3D-structure</keyword>
<keyword id="KW-0210">Decarboxylase</keyword>
<keyword id="KW-0903">Direct protein sequencing</keyword>
<keyword id="KW-0455">Luminescence</keyword>
<keyword id="KW-0456">Lyase</keyword>
<keyword id="KW-0503">Monooxygenase</keyword>
<keyword id="KW-0560">Oxidoreductase</keyword>
<keyword id="KW-0599">Photoprotein</keyword>
<protein>
    <recommendedName>
        <fullName>Coelenterazine h 2-monooxygenase</fullName>
        <ecNumber evidence="3">1.13.12.5</ecNumber>
    </recommendedName>
    <alternativeName>
        <fullName>Renilla-luciferin 2-monooxygenase</fullName>
    </alternativeName>
    <alternativeName>
        <fullName>Renilla-type luciferase</fullName>
    </alternativeName>
</protein>
<comment type="function">
    <text evidence="3">Upon binding the substrate, the enzyme catalyzes an oxygenation, producing a very short-lived hydroperoxide that cyclizes into a dioxetanone structure, which collapses, releasing a CO(2) molecule. The spontaneous breakdown of the dioxetanone releases the energy (about 50 kcal/mole) that is necessary to generate the excited state of the coelenteramide product, which is the singlet form of the monoanion. In vivo the product undergoes the process of nonradiative energy transfer to an accessory protein, a green fluorescent protein (GFP), which results in green bioluminescence. In vitro, in the absence of GFP, the product emits blue light.</text>
</comment>
<comment type="catalytic activity">
    <reaction evidence="3">
        <text>coelenterazine h + O2 = excited coelenteramide h monoanion + hnu + CO2 + H(+)</text>
        <dbReference type="Rhea" id="RHEA:14765"/>
        <dbReference type="ChEBI" id="CHEBI:15378"/>
        <dbReference type="ChEBI" id="CHEBI:15379"/>
        <dbReference type="ChEBI" id="CHEBI:16526"/>
        <dbReference type="ChEBI" id="CHEBI:16531"/>
        <dbReference type="ChEBI" id="CHEBI:30212"/>
        <dbReference type="ChEBI" id="CHEBI:138275"/>
        <dbReference type="EC" id="1.13.12.5"/>
    </reaction>
</comment>
<comment type="biophysicochemical properties">
    <phDependence>
        <text evidence="2">Optimum pH is 7.4.</text>
    </phDependence>
    <temperatureDependence>
        <text evidence="2">Optimum temperature is 32 degrees Celsius.</text>
    </temperatureDependence>
</comment>
<comment type="subunit">
    <text evidence="2 4">Monomer.</text>
</comment>
<comment type="miscellaneous">
    <text>This luciferase produces light with a wavelength of 480 nm. In presence of a green fluorescence protein (GFP) it produces a green fluorescence at 509 nm.</text>
</comment>
<feature type="chain" id="PRO_0000084523" description="Coelenterazine h 2-monooxygenase">
    <location>
        <begin position="1"/>
        <end position="311"/>
    </location>
</feature>
<feature type="domain" description="AB hydrolase-1" evidence="1">
    <location>
        <begin position="45"/>
        <end position="291"/>
    </location>
</feature>
<feature type="binding site" evidence="6">
    <location>
        <position position="162"/>
    </location>
    <ligand>
        <name>substrate</name>
    </ligand>
</feature>
<feature type="binding site" evidence="6">
    <location>
        <position position="285"/>
    </location>
    <ligand>
        <name>substrate</name>
    </ligand>
</feature>
<feature type="sequence conflict" description="In Ref. 1; AA sequence." evidence="5" ref="1">
    <original>W</original>
    <variation>L</variation>
    <location>
        <position position="219"/>
    </location>
</feature>
<feature type="helix" evidence="7">
    <location>
        <begin position="10"/>
        <end position="13"/>
    </location>
</feature>
<feature type="helix" evidence="7">
    <location>
        <begin position="17"/>
        <end position="23"/>
    </location>
</feature>
<feature type="strand" evidence="7">
    <location>
        <begin position="25"/>
        <end position="29"/>
    </location>
</feature>
<feature type="strand" evidence="7">
    <location>
        <begin position="32"/>
        <end position="38"/>
    </location>
</feature>
<feature type="strand" evidence="7">
    <location>
        <begin position="45"/>
        <end position="50"/>
    </location>
</feature>
<feature type="helix" evidence="7">
    <location>
        <begin position="57"/>
        <end position="60"/>
    </location>
</feature>
<feature type="turn" evidence="7">
    <location>
        <begin position="61"/>
        <end position="63"/>
    </location>
</feature>
<feature type="helix" evidence="7">
    <location>
        <begin position="64"/>
        <end position="66"/>
    </location>
</feature>
<feature type="turn" evidence="7">
    <location>
        <begin position="67"/>
        <end position="70"/>
    </location>
</feature>
<feature type="strand" evidence="7">
    <location>
        <begin position="71"/>
        <end position="76"/>
    </location>
</feature>
<feature type="strand" evidence="9">
    <location>
        <begin position="88"/>
        <end position="90"/>
    </location>
</feature>
<feature type="helix" evidence="7">
    <location>
        <begin position="94"/>
        <end position="105"/>
    </location>
</feature>
<feature type="turn" evidence="8">
    <location>
        <begin position="106"/>
        <end position="109"/>
    </location>
</feature>
<feature type="strand" evidence="7">
    <location>
        <begin position="112"/>
        <end position="119"/>
    </location>
</feature>
<feature type="helix" evidence="7">
    <location>
        <begin position="121"/>
        <end position="132"/>
    </location>
</feature>
<feature type="strand" evidence="7">
    <location>
        <begin position="136"/>
        <end position="144"/>
    </location>
</feature>
<feature type="helix" evidence="10">
    <location>
        <begin position="152"/>
        <end position="154"/>
    </location>
</feature>
<feature type="helix" evidence="7">
    <location>
        <begin position="160"/>
        <end position="167"/>
    </location>
</feature>
<feature type="helix" evidence="7">
    <location>
        <begin position="170"/>
        <end position="175"/>
    </location>
</feature>
<feature type="turn" evidence="7">
    <location>
        <begin position="176"/>
        <end position="178"/>
    </location>
</feature>
<feature type="helix" evidence="7">
    <location>
        <begin position="180"/>
        <end position="183"/>
    </location>
</feature>
<feature type="helix" evidence="7">
    <location>
        <begin position="185"/>
        <end position="188"/>
    </location>
</feature>
<feature type="strand" evidence="10">
    <location>
        <begin position="191"/>
        <end position="193"/>
    </location>
</feature>
<feature type="helix" evidence="7">
    <location>
        <begin position="196"/>
        <end position="203"/>
    </location>
</feature>
<feature type="helix" evidence="7">
    <location>
        <begin position="204"/>
        <end position="206"/>
    </location>
</feature>
<feature type="strand" evidence="7">
    <location>
        <begin position="208"/>
        <end position="210"/>
    </location>
</feature>
<feature type="helix" evidence="7">
    <location>
        <begin position="211"/>
        <end position="213"/>
    </location>
</feature>
<feature type="helix" evidence="7">
    <location>
        <begin position="214"/>
        <end position="221"/>
    </location>
</feature>
<feature type="turn" evidence="7">
    <location>
        <begin position="226"/>
        <end position="228"/>
    </location>
</feature>
<feature type="helix" evidence="7">
    <location>
        <begin position="231"/>
        <end position="245"/>
    </location>
</feature>
<feature type="strand" evidence="7">
    <location>
        <begin position="252"/>
        <end position="259"/>
    </location>
</feature>
<feature type="helix" evidence="7">
    <location>
        <begin position="263"/>
        <end position="270"/>
    </location>
</feature>
<feature type="strand" evidence="7">
    <location>
        <begin position="273"/>
        <end position="286"/>
    </location>
</feature>
<feature type="helix" evidence="7">
    <location>
        <begin position="287"/>
        <end position="289"/>
    </location>
</feature>
<feature type="helix" evidence="7">
    <location>
        <begin position="292"/>
        <end position="307"/>
    </location>
</feature>